<comment type="function">
    <text evidence="1">With S4 and S5 plays an important role in translational accuracy. Located at the interface of the 30S and 50S subunits (By similarity).</text>
</comment>
<comment type="subunit">
    <text>Part of the 30S ribosomal subunit.</text>
</comment>
<comment type="subcellular location">
    <subcellularLocation>
        <location>Plastid</location>
        <location>Chloroplast</location>
    </subcellularLocation>
</comment>
<comment type="miscellaneous">
    <text>Exons 2 and 3 are cis-spliced, while a trans-splicing reaction is required to link exons 1 and 2.</text>
</comment>
<comment type="similarity">
    <text evidence="4">Belongs to the universal ribosomal protein uS12 family.</text>
</comment>
<sequence>MPTIKQLIRNTRQPIRNVTKSPALRGCPQRRGTCTRVYTITPKKPNSALRKVARVRLTSGFEITAYIPGIGHNLQEHSVVLVRGGRVKDLPGVRYHIVRGTLDAVGVKDRQQGRSKYGVKKPK</sequence>
<name>RR12_TOBAC</name>
<geneLocation type="chloroplast"/>
<evidence type="ECO:0000250" key="1"/>
<evidence type="ECO:0000255" key="2">
    <source>
        <dbReference type="HAMAP-Rule" id="MF_00403"/>
    </source>
</evidence>
<evidence type="ECO:0000269" key="3">
    <source>
    </source>
</evidence>
<evidence type="ECO:0000305" key="4"/>
<reference key="1">
    <citation type="journal article" date="1986" name="EMBO J.">
        <title>The complete nucleotide sequence of the tobacco chloroplast genome: its gene organization and expression.</title>
        <authorList>
            <person name="Shinozaki K."/>
            <person name="Ohme M."/>
            <person name="Tanaka M."/>
            <person name="Wakasugi T."/>
            <person name="Hayashida N."/>
            <person name="Matsubayashi T."/>
            <person name="Zaita N."/>
            <person name="Chunwongse J."/>
            <person name="Obokata J."/>
            <person name="Yamaguchi-Shinozaki K."/>
            <person name="Ohto C."/>
            <person name="Torazawa K."/>
            <person name="Meng B.-Y."/>
            <person name="Sugita M."/>
            <person name="Deno H."/>
            <person name="Kamogashira T."/>
            <person name="Yamada K."/>
            <person name="Kusuda J."/>
            <person name="Takaiwa F."/>
            <person name="Kato A."/>
            <person name="Tohdoh N."/>
            <person name="Shimada H."/>
            <person name="Sugiura M."/>
        </authorList>
    </citation>
    <scope>NUCLEOTIDE SEQUENCE [LARGE SCALE GENOMIC DNA]</scope>
    <source>
        <strain>cv. Bright Yellow 4</strain>
    </source>
</reference>
<reference key="2">
    <citation type="journal article" date="1986" name="Nucleic Acids Res.">
        <title>The 5' part of the gene for ribosomal protein S12 is located 30 kbp downstream from its 3' part in tobacco chloroplast genome.</title>
        <authorList>
            <person name="Torazawa K."/>
            <person name="Hayashida N."/>
            <person name="Obokata J."/>
            <person name="Shinozaki K."/>
            <person name="Sugiura M."/>
        </authorList>
    </citation>
    <scope>NUCLEOTIDE SEQUENCE [GENOMIC DNA] OF 1-38</scope>
</reference>
<reference key="3">
    <citation type="journal article" date="1986" name="Nucleic Acids Res.">
        <title>The enigma of the gene coding for ribosomal protein S12 in the chloroplasts of Nicotiana.</title>
        <authorList>
            <person name="Fromm H."/>
            <person name="Edelman M."/>
            <person name="Koller B."/>
            <person name="Goloubinoff P."/>
            <person name="Galun E."/>
        </authorList>
    </citation>
    <scope>NUCLEOTIDE SEQUENCE [GENOMIC DNA] OF 39-123</scope>
</reference>
<reference key="4">
    <citation type="journal article" date="1992" name="Plant Cell">
        <title>Long regions of homologous DNA are incorporated into the tobacco plastid genome by transformation.</title>
        <authorList>
            <person name="Staub J.M."/>
            <person name="Maliga P."/>
        </authorList>
    </citation>
    <scope>STREPTOMYCIN RESISTANT MUTANT</scope>
    <scope>MUTAGENESIS OF PRO-91</scope>
    <source>
        <strain>cv. Petit Havana</strain>
    </source>
</reference>
<protein>
    <recommendedName>
        <fullName evidence="2">Small ribosomal subunit protein uS12cz/uS12cy</fullName>
    </recommendedName>
    <alternativeName>
        <fullName evidence="4">30S ribosomal protein S12, chloroplastic</fullName>
    </alternativeName>
</protein>
<gene>
    <name type="primary">rps12-A</name>
</gene>
<gene>
    <name type="primary">rps12-B</name>
</gene>
<keyword id="KW-0046">Antibiotic resistance</keyword>
<keyword id="KW-0150">Chloroplast</keyword>
<keyword id="KW-0934">Plastid</keyword>
<keyword id="KW-1185">Reference proteome</keyword>
<keyword id="KW-0687">Ribonucleoprotein</keyword>
<keyword id="KW-0689">Ribosomal protein</keyword>
<keyword id="KW-0694">RNA-binding</keyword>
<keyword id="KW-0699">rRNA-binding</keyword>
<dbReference type="EMBL" id="Z00044">
    <property type="protein sequence ID" value="CAA77436.1"/>
    <property type="molecule type" value="Genomic_DNA"/>
</dbReference>
<dbReference type="EMBL" id="Z00044">
    <property type="protein sequence ID" value="CAA77429.1"/>
    <property type="molecule type" value="Genomic_DNA"/>
</dbReference>
<dbReference type="EMBL" id="X03724">
    <property type="protein sequence ID" value="CAA27361.1"/>
    <property type="molecule type" value="Genomic_DNA"/>
</dbReference>
<dbReference type="EMBL" id="X03481">
    <property type="protein sequence ID" value="CAA27200.1"/>
    <property type="molecule type" value="Genomic_DNA"/>
</dbReference>
<dbReference type="PIR" id="A02730">
    <property type="entry name" value="R3NT12"/>
</dbReference>
<dbReference type="SMR" id="P62129"/>
<dbReference type="KEGG" id="nta:1466311"/>
<dbReference type="KEGG" id="nta:800423"/>
<dbReference type="OrthoDB" id="414309at2759"/>
<dbReference type="Proteomes" id="UP000084051">
    <property type="component" value="Unplaced"/>
</dbReference>
<dbReference type="GO" id="GO:0009507">
    <property type="term" value="C:chloroplast"/>
    <property type="evidence" value="ECO:0007669"/>
    <property type="project" value="UniProtKB-SubCell"/>
</dbReference>
<dbReference type="GO" id="GO:0015935">
    <property type="term" value="C:small ribosomal subunit"/>
    <property type="evidence" value="ECO:0007669"/>
    <property type="project" value="InterPro"/>
</dbReference>
<dbReference type="GO" id="GO:0019843">
    <property type="term" value="F:rRNA binding"/>
    <property type="evidence" value="ECO:0007669"/>
    <property type="project" value="UniProtKB-UniRule"/>
</dbReference>
<dbReference type="GO" id="GO:0003735">
    <property type="term" value="F:structural constituent of ribosome"/>
    <property type="evidence" value="ECO:0007669"/>
    <property type="project" value="InterPro"/>
</dbReference>
<dbReference type="GO" id="GO:0046677">
    <property type="term" value="P:response to antibiotic"/>
    <property type="evidence" value="ECO:0007669"/>
    <property type="project" value="UniProtKB-KW"/>
</dbReference>
<dbReference type="GO" id="GO:0006412">
    <property type="term" value="P:translation"/>
    <property type="evidence" value="ECO:0007669"/>
    <property type="project" value="UniProtKB-UniRule"/>
</dbReference>
<dbReference type="CDD" id="cd03368">
    <property type="entry name" value="Ribosomal_S12"/>
    <property type="match status" value="1"/>
</dbReference>
<dbReference type="FunFam" id="2.40.50.140:FF:000008">
    <property type="entry name" value="30S ribosomal protein S12, chloroplastic"/>
    <property type="match status" value="1"/>
</dbReference>
<dbReference type="Gene3D" id="2.40.50.140">
    <property type="entry name" value="Nucleic acid-binding proteins"/>
    <property type="match status" value="1"/>
</dbReference>
<dbReference type="HAMAP" id="MF_00403_B">
    <property type="entry name" value="Ribosomal_uS12_B"/>
    <property type="match status" value="1"/>
</dbReference>
<dbReference type="InterPro" id="IPR012340">
    <property type="entry name" value="NA-bd_OB-fold"/>
</dbReference>
<dbReference type="InterPro" id="IPR006032">
    <property type="entry name" value="Ribosomal_uS12"/>
</dbReference>
<dbReference type="InterPro" id="IPR005679">
    <property type="entry name" value="Ribosomal_uS12_bac"/>
</dbReference>
<dbReference type="NCBIfam" id="TIGR00981">
    <property type="entry name" value="rpsL_bact"/>
    <property type="match status" value="1"/>
</dbReference>
<dbReference type="PANTHER" id="PTHR11652">
    <property type="entry name" value="30S RIBOSOMAL PROTEIN S12 FAMILY MEMBER"/>
    <property type="match status" value="1"/>
</dbReference>
<dbReference type="Pfam" id="PF00164">
    <property type="entry name" value="Ribosom_S12_S23"/>
    <property type="match status" value="1"/>
</dbReference>
<dbReference type="PIRSF" id="PIRSF002133">
    <property type="entry name" value="Ribosomal_S12/S23"/>
    <property type="match status" value="1"/>
</dbReference>
<dbReference type="PRINTS" id="PR01034">
    <property type="entry name" value="RIBOSOMALS12"/>
</dbReference>
<dbReference type="SUPFAM" id="SSF50249">
    <property type="entry name" value="Nucleic acid-binding proteins"/>
    <property type="match status" value="1"/>
</dbReference>
<dbReference type="PROSITE" id="PS00055">
    <property type="entry name" value="RIBOSOMAL_S12"/>
    <property type="match status" value="1"/>
</dbReference>
<accession>P62129</accession>
<accession>P06369</accession>
<accession>P28806</accession>
<accession>P56803</accession>
<accession>Q9XQZ8</accession>
<organism>
    <name type="scientific">Nicotiana tabacum</name>
    <name type="common">Common tobacco</name>
    <dbReference type="NCBI Taxonomy" id="4097"/>
    <lineage>
        <taxon>Eukaryota</taxon>
        <taxon>Viridiplantae</taxon>
        <taxon>Streptophyta</taxon>
        <taxon>Embryophyta</taxon>
        <taxon>Tracheophyta</taxon>
        <taxon>Spermatophyta</taxon>
        <taxon>Magnoliopsida</taxon>
        <taxon>eudicotyledons</taxon>
        <taxon>Gunneridae</taxon>
        <taxon>Pentapetalae</taxon>
        <taxon>asterids</taxon>
        <taxon>lamiids</taxon>
        <taxon>Solanales</taxon>
        <taxon>Solanaceae</taxon>
        <taxon>Nicotianoideae</taxon>
        <taxon>Nicotianeae</taxon>
        <taxon>Nicotiana</taxon>
    </lineage>
</organism>
<feature type="initiator methionine" description="Removed" evidence="1">
    <location>
        <position position="1"/>
    </location>
</feature>
<feature type="chain" id="PRO_0000146430" description="Small ribosomal subunit protein uS12cz/uS12cy">
    <location>
        <begin position="2"/>
        <end position="123"/>
    </location>
</feature>
<feature type="mutagenesis site" description="Streptomycin resistance." evidence="3">
    <original>P</original>
    <variation>S</variation>
    <location>
        <position position="91"/>
    </location>
</feature>
<proteinExistence type="evidence at protein level"/>